<gene>
    <name evidence="1" type="primary">ligA</name>
    <name type="ordered locus">HAPS_0011</name>
</gene>
<feature type="chain" id="PRO_0000380391" description="DNA ligase">
    <location>
        <begin position="1"/>
        <end position="675"/>
    </location>
</feature>
<feature type="domain" description="BRCT" evidence="1">
    <location>
        <begin position="594"/>
        <end position="675"/>
    </location>
</feature>
<feature type="active site" description="N6-AMP-lysine intermediate" evidence="1">
    <location>
        <position position="117"/>
    </location>
</feature>
<feature type="binding site" evidence="1">
    <location>
        <begin position="33"/>
        <end position="37"/>
    </location>
    <ligand>
        <name>NAD(+)</name>
        <dbReference type="ChEBI" id="CHEBI:57540"/>
    </ligand>
</feature>
<feature type="binding site" evidence="1">
    <location>
        <begin position="82"/>
        <end position="83"/>
    </location>
    <ligand>
        <name>NAD(+)</name>
        <dbReference type="ChEBI" id="CHEBI:57540"/>
    </ligand>
</feature>
<feature type="binding site" evidence="1">
    <location>
        <position position="115"/>
    </location>
    <ligand>
        <name>NAD(+)</name>
        <dbReference type="ChEBI" id="CHEBI:57540"/>
    </ligand>
</feature>
<feature type="binding site" evidence="1">
    <location>
        <position position="138"/>
    </location>
    <ligand>
        <name>NAD(+)</name>
        <dbReference type="ChEBI" id="CHEBI:57540"/>
    </ligand>
</feature>
<feature type="binding site" evidence="1">
    <location>
        <position position="175"/>
    </location>
    <ligand>
        <name>NAD(+)</name>
        <dbReference type="ChEBI" id="CHEBI:57540"/>
    </ligand>
</feature>
<feature type="binding site" evidence="1">
    <location>
        <position position="293"/>
    </location>
    <ligand>
        <name>NAD(+)</name>
        <dbReference type="ChEBI" id="CHEBI:57540"/>
    </ligand>
</feature>
<feature type="binding site" evidence="1">
    <location>
        <position position="317"/>
    </location>
    <ligand>
        <name>NAD(+)</name>
        <dbReference type="ChEBI" id="CHEBI:57540"/>
    </ligand>
</feature>
<feature type="binding site" evidence="1">
    <location>
        <position position="411"/>
    </location>
    <ligand>
        <name>Zn(2+)</name>
        <dbReference type="ChEBI" id="CHEBI:29105"/>
    </ligand>
</feature>
<feature type="binding site" evidence="1">
    <location>
        <position position="414"/>
    </location>
    <ligand>
        <name>Zn(2+)</name>
        <dbReference type="ChEBI" id="CHEBI:29105"/>
    </ligand>
</feature>
<feature type="binding site" evidence="1">
    <location>
        <position position="429"/>
    </location>
    <ligand>
        <name>Zn(2+)</name>
        <dbReference type="ChEBI" id="CHEBI:29105"/>
    </ligand>
</feature>
<feature type="binding site" evidence="1">
    <location>
        <position position="435"/>
    </location>
    <ligand>
        <name>Zn(2+)</name>
        <dbReference type="ChEBI" id="CHEBI:29105"/>
    </ligand>
</feature>
<sequence length="675" mass="74701">MPHSIETQLEHLREKLREYEYHYHVLDNPLVPDAEYDRLMNELKNLEWQHPELITSDSPTQRVGAKPLDGFAQITHEIPMLSLDNAFSDDDLTGFLRRIEDRIAINSNQIEFCCEPKLDGLAVSILYVDGVLTQAATRGDGTTGEDITANIRTIRNIPLKLKTNNPPHRLEVRGEVFMPQQGFEQLNEKALAKGEKTFANPRNAAAGSLRQLDPKITSQRPLMLNAYNIGVYESDDELPTTHFDRLQWLKTLGIPVNAEITLATGSQALTAFYQKIQAKRSSLGYDIDGTVLKVNEITLQEQLGFISKAPRWAIAYKFPAQEEMTILNDVEFQVGRTGAITPVAKLEPVFVAGVTVSNATLHNGDEIERLGIAIGDTVIIRRAGDVIPQIVGVVAERRPDNAKKIAFPTACPVCNSAVVRVEGEAVARCTGGLFCGAQRKEALKHFVSRKAMDIDGVGEKLIEQLMERELIHTPADLFKLDHTTLMRLDRMGEKSANNALQSIEKAKNTTLARFLFALGIRDVGESTAQNLANHFGTLDAIRQADLDTLKQVQDVGEVVANRLFQFWQEPHNVEVVEDLIAQGVTWQDVVPQEIADNPLKDKTVVLTGTLTQLTRDQAKALLQQLGCKVSGSVSSKTDYLIAGEKAGSKLAKAQELGVKILSEDELIGYFTTIVS</sequence>
<evidence type="ECO:0000255" key="1">
    <source>
        <dbReference type="HAMAP-Rule" id="MF_01588"/>
    </source>
</evidence>
<name>DNLJ_GLAP5</name>
<accession>B8F314</accession>
<reference key="1">
    <citation type="journal article" date="2009" name="J. Bacteriol.">
        <title>Complete genome sequence of Haemophilus parasuis SH0165.</title>
        <authorList>
            <person name="Yue M."/>
            <person name="Yang F."/>
            <person name="Yang J."/>
            <person name="Bei W."/>
            <person name="Cai X."/>
            <person name="Chen L."/>
            <person name="Dong J."/>
            <person name="Zhou R."/>
            <person name="Jin M."/>
            <person name="Jin Q."/>
            <person name="Chen H."/>
        </authorList>
    </citation>
    <scope>NUCLEOTIDE SEQUENCE [LARGE SCALE GENOMIC DNA]</scope>
    <source>
        <strain>SH0165</strain>
    </source>
</reference>
<dbReference type="EC" id="6.5.1.2" evidence="1"/>
<dbReference type="EMBL" id="CP001321">
    <property type="protein sequence ID" value="ACL31716.1"/>
    <property type="molecule type" value="Genomic_DNA"/>
</dbReference>
<dbReference type="RefSeq" id="WP_012621494.1">
    <property type="nucleotide sequence ID" value="NC_011852.1"/>
</dbReference>
<dbReference type="SMR" id="B8F314"/>
<dbReference type="STRING" id="557723.HAPS_0011"/>
<dbReference type="GeneID" id="66618399"/>
<dbReference type="KEGG" id="hap:HAPS_0011"/>
<dbReference type="PATRIC" id="fig|557723.8.peg.13"/>
<dbReference type="HOGENOM" id="CLU_007764_2_1_6"/>
<dbReference type="Proteomes" id="UP000006743">
    <property type="component" value="Chromosome"/>
</dbReference>
<dbReference type="GO" id="GO:0005829">
    <property type="term" value="C:cytosol"/>
    <property type="evidence" value="ECO:0007669"/>
    <property type="project" value="TreeGrafter"/>
</dbReference>
<dbReference type="GO" id="GO:0003677">
    <property type="term" value="F:DNA binding"/>
    <property type="evidence" value="ECO:0007669"/>
    <property type="project" value="InterPro"/>
</dbReference>
<dbReference type="GO" id="GO:0003911">
    <property type="term" value="F:DNA ligase (NAD+) activity"/>
    <property type="evidence" value="ECO:0007669"/>
    <property type="project" value="UniProtKB-UniRule"/>
</dbReference>
<dbReference type="GO" id="GO:0046872">
    <property type="term" value="F:metal ion binding"/>
    <property type="evidence" value="ECO:0007669"/>
    <property type="project" value="UniProtKB-KW"/>
</dbReference>
<dbReference type="GO" id="GO:0006281">
    <property type="term" value="P:DNA repair"/>
    <property type="evidence" value="ECO:0007669"/>
    <property type="project" value="UniProtKB-KW"/>
</dbReference>
<dbReference type="GO" id="GO:0006260">
    <property type="term" value="P:DNA replication"/>
    <property type="evidence" value="ECO:0007669"/>
    <property type="project" value="UniProtKB-KW"/>
</dbReference>
<dbReference type="CDD" id="cd17748">
    <property type="entry name" value="BRCT_DNA_ligase_like"/>
    <property type="match status" value="1"/>
</dbReference>
<dbReference type="CDD" id="cd00114">
    <property type="entry name" value="LIGANc"/>
    <property type="match status" value="1"/>
</dbReference>
<dbReference type="FunFam" id="1.10.150.20:FF:000006">
    <property type="entry name" value="DNA ligase"/>
    <property type="match status" value="1"/>
</dbReference>
<dbReference type="FunFam" id="1.10.150.20:FF:000007">
    <property type="entry name" value="DNA ligase"/>
    <property type="match status" value="1"/>
</dbReference>
<dbReference type="FunFam" id="1.10.287.610:FF:000002">
    <property type="entry name" value="DNA ligase"/>
    <property type="match status" value="1"/>
</dbReference>
<dbReference type="FunFam" id="2.40.50.140:FF:000012">
    <property type="entry name" value="DNA ligase"/>
    <property type="match status" value="1"/>
</dbReference>
<dbReference type="FunFam" id="3.30.470.30:FF:000001">
    <property type="entry name" value="DNA ligase"/>
    <property type="match status" value="1"/>
</dbReference>
<dbReference type="FunFam" id="6.20.10.30:FF:000001">
    <property type="entry name" value="DNA ligase"/>
    <property type="match status" value="1"/>
</dbReference>
<dbReference type="Gene3D" id="6.20.10.30">
    <property type="match status" value="1"/>
</dbReference>
<dbReference type="Gene3D" id="1.10.150.20">
    <property type="entry name" value="5' to 3' exonuclease, C-terminal subdomain"/>
    <property type="match status" value="2"/>
</dbReference>
<dbReference type="Gene3D" id="3.40.50.10190">
    <property type="entry name" value="BRCT domain"/>
    <property type="match status" value="1"/>
</dbReference>
<dbReference type="Gene3D" id="3.30.470.30">
    <property type="entry name" value="DNA ligase/mRNA capping enzyme"/>
    <property type="match status" value="1"/>
</dbReference>
<dbReference type="Gene3D" id="1.10.287.610">
    <property type="entry name" value="Helix hairpin bin"/>
    <property type="match status" value="1"/>
</dbReference>
<dbReference type="Gene3D" id="2.40.50.140">
    <property type="entry name" value="Nucleic acid-binding proteins"/>
    <property type="match status" value="1"/>
</dbReference>
<dbReference type="HAMAP" id="MF_01588">
    <property type="entry name" value="DNA_ligase_A"/>
    <property type="match status" value="1"/>
</dbReference>
<dbReference type="InterPro" id="IPR001357">
    <property type="entry name" value="BRCT_dom"/>
</dbReference>
<dbReference type="InterPro" id="IPR036420">
    <property type="entry name" value="BRCT_dom_sf"/>
</dbReference>
<dbReference type="InterPro" id="IPR041663">
    <property type="entry name" value="DisA/LigA_HHH"/>
</dbReference>
<dbReference type="InterPro" id="IPR001679">
    <property type="entry name" value="DNA_ligase"/>
</dbReference>
<dbReference type="InterPro" id="IPR018239">
    <property type="entry name" value="DNA_ligase_AS"/>
</dbReference>
<dbReference type="InterPro" id="IPR033136">
    <property type="entry name" value="DNA_ligase_CS"/>
</dbReference>
<dbReference type="InterPro" id="IPR013839">
    <property type="entry name" value="DNAligase_adenylation"/>
</dbReference>
<dbReference type="InterPro" id="IPR013840">
    <property type="entry name" value="DNAligase_N"/>
</dbReference>
<dbReference type="InterPro" id="IPR003583">
    <property type="entry name" value="Hlx-hairpin-Hlx_DNA-bd_motif"/>
</dbReference>
<dbReference type="InterPro" id="IPR012340">
    <property type="entry name" value="NA-bd_OB-fold"/>
</dbReference>
<dbReference type="InterPro" id="IPR004150">
    <property type="entry name" value="NAD_DNA_ligase_OB"/>
</dbReference>
<dbReference type="InterPro" id="IPR010994">
    <property type="entry name" value="RuvA_2-like"/>
</dbReference>
<dbReference type="InterPro" id="IPR004149">
    <property type="entry name" value="Znf_DNAligase_C4"/>
</dbReference>
<dbReference type="NCBIfam" id="TIGR00575">
    <property type="entry name" value="dnlj"/>
    <property type="match status" value="1"/>
</dbReference>
<dbReference type="NCBIfam" id="NF005932">
    <property type="entry name" value="PRK07956.1"/>
    <property type="match status" value="1"/>
</dbReference>
<dbReference type="PANTHER" id="PTHR23389">
    <property type="entry name" value="CHROMOSOME TRANSMISSION FIDELITY FACTOR 18"/>
    <property type="match status" value="1"/>
</dbReference>
<dbReference type="PANTHER" id="PTHR23389:SF9">
    <property type="entry name" value="DNA LIGASE"/>
    <property type="match status" value="1"/>
</dbReference>
<dbReference type="Pfam" id="PF00533">
    <property type="entry name" value="BRCT"/>
    <property type="match status" value="1"/>
</dbReference>
<dbReference type="Pfam" id="PF01653">
    <property type="entry name" value="DNA_ligase_aden"/>
    <property type="match status" value="1"/>
</dbReference>
<dbReference type="Pfam" id="PF03120">
    <property type="entry name" value="DNA_ligase_OB"/>
    <property type="match status" value="1"/>
</dbReference>
<dbReference type="Pfam" id="PF03119">
    <property type="entry name" value="DNA_ligase_ZBD"/>
    <property type="match status" value="1"/>
</dbReference>
<dbReference type="Pfam" id="PF12826">
    <property type="entry name" value="HHH_2"/>
    <property type="match status" value="1"/>
</dbReference>
<dbReference type="Pfam" id="PF14520">
    <property type="entry name" value="HHH_5"/>
    <property type="match status" value="1"/>
</dbReference>
<dbReference type="Pfam" id="PF22745">
    <property type="entry name" value="Nlig-Ia"/>
    <property type="match status" value="1"/>
</dbReference>
<dbReference type="PIRSF" id="PIRSF001604">
    <property type="entry name" value="LigA"/>
    <property type="match status" value="1"/>
</dbReference>
<dbReference type="SMART" id="SM00292">
    <property type="entry name" value="BRCT"/>
    <property type="match status" value="1"/>
</dbReference>
<dbReference type="SMART" id="SM00278">
    <property type="entry name" value="HhH1"/>
    <property type="match status" value="4"/>
</dbReference>
<dbReference type="SMART" id="SM00532">
    <property type="entry name" value="LIGANc"/>
    <property type="match status" value="1"/>
</dbReference>
<dbReference type="SUPFAM" id="SSF52113">
    <property type="entry name" value="BRCT domain"/>
    <property type="match status" value="1"/>
</dbReference>
<dbReference type="SUPFAM" id="SSF56091">
    <property type="entry name" value="DNA ligase/mRNA capping enzyme, catalytic domain"/>
    <property type="match status" value="1"/>
</dbReference>
<dbReference type="SUPFAM" id="SSF50249">
    <property type="entry name" value="Nucleic acid-binding proteins"/>
    <property type="match status" value="1"/>
</dbReference>
<dbReference type="SUPFAM" id="SSF47781">
    <property type="entry name" value="RuvA domain 2-like"/>
    <property type="match status" value="1"/>
</dbReference>
<dbReference type="PROSITE" id="PS50172">
    <property type="entry name" value="BRCT"/>
    <property type="match status" value="1"/>
</dbReference>
<dbReference type="PROSITE" id="PS01055">
    <property type="entry name" value="DNA_LIGASE_N1"/>
    <property type="match status" value="1"/>
</dbReference>
<dbReference type="PROSITE" id="PS01056">
    <property type="entry name" value="DNA_LIGASE_N2"/>
    <property type="match status" value="1"/>
</dbReference>
<keyword id="KW-0227">DNA damage</keyword>
<keyword id="KW-0234">DNA repair</keyword>
<keyword id="KW-0235">DNA replication</keyword>
<keyword id="KW-0436">Ligase</keyword>
<keyword id="KW-0460">Magnesium</keyword>
<keyword id="KW-0464">Manganese</keyword>
<keyword id="KW-0479">Metal-binding</keyword>
<keyword id="KW-0520">NAD</keyword>
<keyword id="KW-1185">Reference proteome</keyword>
<keyword id="KW-0862">Zinc</keyword>
<organism>
    <name type="scientific">Glaesserella parasuis serovar 5 (strain SH0165)</name>
    <name type="common">Haemophilus parasuis</name>
    <dbReference type="NCBI Taxonomy" id="557723"/>
    <lineage>
        <taxon>Bacteria</taxon>
        <taxon>Pseudomonadati</taxon>
        <taxon>Pseudomonadota</taxon>
        <taxon>Gammaproteobacteria</taxon>
        <taxon>Pasteurellales</taxon>
        <taxon>Pasteurellaceae</taxon>
        <taxon>Glaesserella</taxon>
    </lineage>
</organism>
<comment type="function">
    <text evidence="1">DNA ligase that catalyzes the formation of phosphodiester linkages between 5'-phosphoryl and 3'-hydroxyl groups in double-stranded DNA using NAD as a coenzyme and as the energy source for the reaction. It is essential for DNA replication and repair of damaged DNA.</text>
</comment>
<comment type="catalytic activity">
    <reaction evidence="1">
        <text>NAD(+) + (deoxyribonucleotide)n-3'-hydroxyl + 5'-phospho-(deoxyribonucleotide)m = (deoxyribonucleotide)n+m + AMP + beta-nicotinamide D-nucleotide.</text>
        <dbReference type="EC" id="6.5.1.2"/>
    </reaction>
</comment>
<comment type="cofactor">
    <cofactor evidence="1">
        <name>Mg(2+)</name>
        <dbReference type="ChEBI" id="CHEBI:18420"/>
    </cofactor>
    <cofactor evidence="1">
        <name>Mn(2+)</name>
        <dbReference type="ChEBI" id="CHEBI:29035"/>
    </cofactor>
</comment>
<comment type="similarity">
    <text evidence="1">Belongs to the NAD-dependent DNA ligase family. LigA subfamily.</text>
</comment>
<proteinExistence type="inferred from homology"/>
<protein>
    <recommendedName>
        <fullName evidence="1">DNA ligase</fullName>
        <ecNumber evidence="1">6.5.1.2</ecNumber>
    </recommendedName>
    <alternativeName>
        <fullName evidence="1">Polydeoxyribonucleotide synthase [NAD(+)]</fullName>
    </alternativeName>
</protein>